<accession>Q84Y18</accession>
<accession>Q8L8W3</accession>
<accession>Q9ZV23</accession>
<protein>
    <recommendedName>
        <fullName>CAX-interacting protein 4</fullName>
    </recommendedName>
</protein>
<organism>
    <name type="scientific">Arabidopsis thaliana</name>
    <name type="common">Mouse-ear cress</name>
    <dbReference type="NCBI Taxonomy" id="3702"/>
    <lineage>
        <taxon>Eukaryota</taxon>
        <taxon>Viridiplantae</taxon>
        <taxon>Streptophyta</taxon>
        <taxon>Embryophyta</taxon>
        <taxon>Tracheophyta</taxon>
        <taxon>Spermatophyta</taxon>
        <taxon>Magnoliopsida</taxon>
        <taxon>eudicotyledons</taxon>
        <taxon>Gunneridae</taxon>
        <taxon>Pentapetalae</taxon>
        <taxon>rosids</taxon>
        <taxon>malvids</taxon>
        <taxon>Brassicales</taxon>
        <taxon>Brassicaceae</taxon>
        <taxon>Camelineae</taxon>
        <taxon>Arabidopsis</taxon>
    </lineage>
</organism>
<comment type="function">
    <text evidence="4">May regulate CAX1 cation transporter.</text>
</comment>
<comment type="subunit">
    <text evidence="3 5">Interacts with CAX1.</text>
</comment>
<comment type="interaction">
    <interactant intactId="EBI-25522794">
        <id>Q84Y18</id>
    </interactant>
    <interactant intactId="EBI-530486">
        <id>P46639</id>
        <label>KNAT1</label>
    </interactant>
    <organismsDiffer>false</organismsDiffer>
    <experiments>3</experiments>
</comment>
<comment type="subcellular location">
    <subcellularLocation>
        <location evidence="4">Nucleus</location>
    </subcellularLocation>
</comment>
<comment type="tissue specificity">
    <text evidence="4">Expressed in leaves, stems and roots, and at lower levels in flowers.</text>
</comment>
<comment type="induction">
    <text evidence="4">Slightly induced by Ca(2+).</text>
</comment>
<name>CXIP4_ARATH</name>
<dbReference type="EMBL" id="AY163162">
    <property type="protein sequence ID" value="AAO17572.1"/>
    <property type="molecule type" value="mRNA"/>
</dbReference>
<dbReference type="EMBL" id="AC005727">
    <property type="protein sequence ID" value="AAC79595.1"/>
    <property type="molecule type" value="Genomic_DNA"/>
</dbReference>
<dbReference type="EMBL" id="CP002685">
    <property type="protein sequence ID" value="AEC08187.1"/>
    <property type="molecule type" value="Genomic_DNA"/>
</dbReference>
<dbReference type="EMBL" id="CP002685">
    <property type="protein sequence ID" value="ANM61431.1"/>
    <property type="molecule type" value="Genomic_DNA"/>
</dbReference>
<dbReference type="EMBL" id="CP002685">
    <property type="protein sequence ID" value="ANM61432.1"/>
    <property type="molecule type" value="Genomic_DNA"/>
</dbReference>
<dbReference type="EMBL" id="AF428457">
    <property type="protein sequence ID" value="AAL16226.1"/>
    <property type="molecule type" value="mRNA"/>
</dbReference>
<dbReference type="EMBL" id="AY142061">
    <property type="protein sequence ID" value="AAM98325.1"/>
    <property type="molecule type" value="mRNA"/>
</dbReference>
<dbReference type="EMBL" id="AY088773">
    <property type="protein sequence ID" value="AAM67086.1"/>
    <property type="molecule type" value="mRNA"/>
</dbReference>
<dbReference type="PIR" id="D84690">
    <property type="entry name" value="D84690"/>
</dbReference>
<dbReference type="RefSeq" id="NP_001323648.1">
    <property type="nucleotide sequence ID" value="NM_001336192.1"/>
</dbReference>
<dbReference type="RefSeq" id="NP_001323649.1">
    <property type="nucleotide sequence ID" value="NM_001336191.1"/>
</dbReference>
<dbReference type="RefSeq" id="NP_565678.1">
    <property type="nucleotide sequence ID" value="NM_128450.2"/>
</dbReference>
<dbReference type="BioGRID" id="2790">
    <property type="interactions" value="3"/>
</dbReference>
<dbReference type="FunCoup" id="Q84Y18">
    <property type="interactions" value="1372"/>
</dbReference>
<dbReference type="IntAct" id="Q84Y18">
    <property type="interactions" value="2"/>
</dbReference>
<dbReference type="STRING" id="3702.Q84Y18"/>
<dbReference type="iPTMnet" id="Q84Y18"/>
<dbReference type="PaxDb" id="3702-AT2G28910.1"/>
<dbReference type="ProteomicsDB" id="220432"/>
<dbReference type="EnsemblPlants" id="AT2G28910.1">
    <property type="protein sequence ID" value="AT2G28910.1"/>
    <property type="gene ID" value="AT2G28910"/>
</dbReference>
<dbReference type="EnsemblPlants" id="AT2G28910.2">
    <property type="protein sequence ID" value="AT2G28910.2"/>
    <property type="gene ID" value="AT2G28910"/>
</dbReference>
<dbReference type="EnsemblPlants" id="AT2G28910.3">
    <property type="protein sequence ID" value="AT2G28910.3"/>
    <property type="gene ID" value="AT2G28910"/>
</dbReference>
<dbReference type="GeneID" id="817440"/>
<dbReference type="Gramene" id="AT2G28910.1">
    <property type="protein sequence ID" value="AT2G28910.1"/>
    <property type="gene ID" value="AT2G28910"/>
</dbReference>
<dbReference type="Gramene" id="AT2G28910.2">
    <property type="protein sequence ID" value="AT2G28910.2"/>
    <property type="gene ID" value="AT2G28910"/>
</dbReference>
<dbReference type="Gramene" id="AT2G28910.3">
    <property type="protein sequence ID" value="AT2G28910.3"/>
    <property type="gene ID" value="AT2G28910"/>
</dbReference>
<dbReference type="KEGG" id="ath:AT2G28910"/>
<dbReference type="Araport" id="AT2G28910"/>
<dbReference type="TAIR" id="AT2G28910">
    <property type="gene designation" value="CXIP4"/>
</dbReference>
<dbReference type="eggNOG" id="KOG2985">
    <property type="taxonomic scope" value="Eukaryota"/>
</dbReference>
<dbReference type="HOGENOM" id="CLU_062939_0_0_1"/>
<dbReference type="InParanoid" id="Q84Y18"/>
<dbReference type="OMA" id="GHLNFQC"/>
<dbReference type="PRO" id="PR:Q84Y18"/>
<dbReference type="Proteomes" id="UP000006548">
    <property type="component" value="Chromosome 2"/>
</dbReference>
<dbReference type="ExpressionAtlas" id="Q84Y18">
    <property type="expression patterns" value="baseline and differential"/>
</dbReference>
<dbReference type="GO" id="GO:0005737">
    <property type="term" value="C:cytoplasm"/>
    <property type="evidence" value="ECO:0000314"/>
    <property type="project" value="TAIR"/>
</dbReference>
<dbReference type="GO" id="GO:0005634">
    <property type="term" value="C:nucleus"/>
    <property type="evidence" value="ECO:0000314"/>
    <property type="project" value="TAIR"/>
</dbReference>
<dbReference type="GO" id="GO:0003676">
    <property type="term" value="F:nucleic acid binding"/>
    <property type="evidence" value="ECO:0007669"/>
    <property type="project" value="InterPro"/>
</dbReference>
<dbReference type="GO" id="GO:0008270">
    <property type="term" value="F:zinc ion binding"/>
    <property type="evidence" value="ECO:0007669"/>
    <property type="project" value="UniProtKB-KW"/>
</dbReference>
<dbReference type="InterPro" id="IPR001878">
    <property type="entry name" value="Znf_CCHC"/>
</dbReference>
<dbReference type="PANTHER" id="PTHR31437:SF1">
    <property type="entry name" value="PROTEIN SREK1IP1"/>
    <property type="match status" value="1"/>
</dbReference>
<dbReference type="PANTHER" id="PTHR31437">
    <property type="entry name" value="SREK1IP1 FAMILY MEMBER"/>
    <property type="match status" value="1"/>
</dbReference>
<dbReference type="Pfam" id="PF13917">
    <property type="entry name" value="zf-CCHC_3"/>
    <property type="match status" value="1"/>
</dbReference>
<dbReference type="PROSITE" id="PS50158">
    <property type="entry name" value="ZF_CCHC"/>
    <property type="match status" value="1"/>
</dbReference>
<evidence type="ECO:0000255" key="1">
    <source>
        <dbReference type="PROSITE-ProRule" id="PRU00047"/>
    </source>
</evidence>
<evidence type="ECO:0000256" key="2">
    <source>
        <dbReference type="SAM" id="MobiDB-lite"/>
    </source>
</evidence>
<evidence type="ECO:0000269" key="3">
    <source>
    </source>
</evidence>
<evidence type="ECO:0000269" key="4">
    <source>
    </source>
</evidence>
<evidence type="ECO:0000269" key="5">
    <source ref="5"/>
</evidence>
<evidence type="ECO:0000305" key="6"/>
<feature type="chain" id="PRO_0000270156" description="CAX-interacting protein 4">
    <location>
        <begin position="1"/>
        <end position="332"/>
    </location>
</feature>
<feature type="zinc finger region" description="CCHC-type" evidence="1">
    <location>
        <begin position="81"/>
        <end position="98"/>
    </location>
</feature>
<feature type="region of interest" description="Disordered" evidence="2">
    <location>
        <begin position="33"/>
        <end position="59"/>
    </location>
</feature>
<feature type="region of interest" description="Disordered" evidence="2">
    <location>
        <begin position="124"/>
        <end position="332"/>
    </location>
</feature>
<feature type="compositionally biased region" description="Basic and acidic residues" evidence="2">
    <location>
        <begin position="41"/>
        <end position="54"/>
    </location>
</feature>
<feature type="compositionally biased region" description="Basic and acidic residues" evidence="2">
    <location>
        <begin position="124"/>
        <end position="133"/>
    </location>
</feature>
<feature type="compositionally biased region" description="Acidic residues" evidence="2">
    <location>
        <begin position="134"/>
        <end position="153"/>
    </location>
</feature>
<feature type="compositionally biased region" description="Basic and acidic residues" evidence="2">
    <location>
        <begin position="154"/>
        <end position="163"/>
    </location>
</feature>
<feature type="compositionally biased region" description="Basic residues" evidence="2">
    <location>
        <begin position="198"/>
        <end position="214"/>
    </location>
</feature>
<feature type="compositionally biased region" description="Basic residues" evidence="2">
    <location>
        <begin position="227"/>
        <end position="236"/>
    </location>
</feature>
<feature type="compositionally biased region" description="Acidic residues" evidence="2">
    <location>
        <begin position="241"/>
        <end position="250"/>
    </location>
</feature>
<feature type="compositionally biased region" description="Basic residues" evidence="2">
    <location>
        <begin position="254"/>
        <end position="269"/>
    </location>
</feature>
<feature type="compositionally biased region" description="Basic residues" evidence="2">
    <location>
        <begin position="314"/>
        <end position="332"/>
    </location>
</feature>
<feature type="sequence conflict" description="In Ref. 1; AAO17572." evidence="6" ref="1">
    <original>A</original>
    <variation>R</variation>
    <location>
        <position position="3"/>
    </location>
</feature>
<feature type="sequence conflict" description="In Ref. 5; AAM67086." evidence="6" ref="5">
    <original>R</original>
    <variation>L</variation>
    <location>
        <position position="317"/>
    </location>
</feature>
<sequence length="332" mass="37832">MPATAGRVRMPANNRVHSSAALQTHGIWQSAIGYDPYAPTSKEEPKTTQQKTEDPENSYASFQGLLALARITGSNNDEARGSCKKCGRVGHLTFQCRNFLSTKEDKEKDPGAIEAAVLSGLEKIRRGVGKGEVEEVSSEEEEESESSDSDVDSEMERIIAERFGKKKGGSSVKKTSSVRKKKKRVSDESDSDSDSGDRKRRRRSMKKRSSHKRRSLSESEDEEEGRSKRRKERRGRKRDEDDSDESEDEDDRRVKRKSRKEKRRRRSRRNHSDDSDSESSEDDRRQKRRNKVAASSDSEANVSGDDVSRVGRGSSKRSEKKSRKRHHRKERE</sequence>
<gene>
    <name type="primary">CXIP4</name>
    <name type="ordered locus">At2g28910</name>
    <name type="ORF">F8N16.20</name>
</gene>
<keyword id="KW-0479">Metal-binding</keyword>
<keyword id="KW-0539">Nucleus</keyword>
<keyword id="KW-1185">Reference proteome</keyword>
<keyword id="KW-0862">Zinc</keyword>
<keyword id="KW-0863">Zinc-finger</keyword>
<proteinExistence type="evidence at protein level"/>
<reference key="1">
    <citation type="journal article" date="2003" name="J. Biol. Chem.">
        <title>Cloning and characterization of CXIP1 A novel PICOT domain-containing Arabidopsis protein that associates with CAX1.</title>
        <authorList>
            <person name="Cheng N.-H."/>
            <person name="Hirschi K.D."/>
        </authorList>
    </citation>
    <scope>NUCLEOTIDE SEQUENCE [MRNA]</scope>
    <scope>INTERACTION WITH CAX1</scope>
</reference>
<reference key="2">
    <citation type="journal article" date="1999" name="Nature">
        <title>Sequence and analysis of chromosome 2 of the plant Arabidopsis thaliana.</title>
        <authorList>
            <person name="Lin X."/>
            <person name="Kaul S."/>
            <person name="Rounsley S.D."/>
            <person name="Shea T.P."/>
            <person name="Benito M.-I."/>
            <person name="Town C.D."/>
            <person name="Fujii C.Y."/>
            <person name="Mason T.M."/>
            <person name="Bowman C.L."/>
            <person name="Barnstead M.E."/>
            <person name="Feldblyum T.V."/>
            <person name="Buell C.R."/>
            <person name="Ketchum K.A."/>
            <person name="Lee J.J."/>
            <person name="Ronning C.M."/>
            <person name="Koo H.L."/>
            <person name="Moffat K.S."/>
            <person name="Cronin L.A."/>
            <person name="Shen M."/>
            <person name="Pai G."/>
            <person name="Van Aken S."/>
            <person name="Umayam L."/>
            <person name="Tallon L.J."/>
            <person name="Gill J.E."/>
            <person name="Adams M.D."/>
            <person name="Carrera A.J."/>
            <person name="Creasy T.H."/>
            <person name="Goodman H.M."/>
            <person name="Somerville C.R."/>
            <person name="Copenhaver G.P."/>
            <person name="Preuss D."/>
            <person name="Nierman W.C."/>
            <person name="White O."/>
            <person name="Eisen J.A."/>
            <person name="Salzberg S.L."/>
            <person name="Fraser C.M."/>
            <person name="Venter J.C."/>
        </authorList>
    </citation>
    <scope>NUCLEOTIDE SEQUENCE [LARGE SCALE GENOMIC DNA]</scope>
    <source>
        <strain>cv. Columbia</strain>
    </source>
</reference>
<reference key="3">
    <citation type="journal article" date="2017" name="Plant J.">
        <title>Araport11: a complete reannotation of the Arabidopsis thaliana reference genome.</title>
        <authorList>
            <person name="Cheng C.Y."/>
            <person name="Krishnakumar V."/>
            <person name="Chan A.P."/>
            <person name="Thibaud-Nissen F."/>
            <person name="Schobel S."/>
            <person name="Town C.D."/>
        </authorList>
    </citation>
    <scope>GENOME REANNOTATION</scope>
    <source>
        <strain>cv. Columbia</strain>
    </source>
</reference>
<reference key="4">
    <citation type="journal article" date="2003" name="Science">
        <title>Empirical analysis of transcriptional activity in the Arabidopsis genome.</title>
        <authorList>
            <person name="Yamada K."/>
            <person name="Lim J."/>
            <person name="Dale J.M."/>
            <person name="Chen H."/>
            <person name="Shinn P."/>
            <person name="Palm C.J."/>
            <person name="Southwick A.M."/>
            <person name="Wu H.C."/>
            <person name="Kim C.J."/>
            <person name="Nguyen M."/>
            <person name="Pham P.K."/>
            <person name="Cheuk R.F."/>
            <person name="Karlin-Newmann G."/>
            <person name="Liu S.X."/>
            <person name="Lam B."/>
            <person name="Sakano H."/>
            <person name="Wu T."/>
            <person name="Yu G."/>
            <person name="Miranda M."/>
            <person name="Quach H.L."/>
            <person name="Tripp M."/>
            <person name="Chang C.H."/>
            <person name="Lee J.M."/>
            <person name="Toriumi M.J."/>
            <person name="Chan M.M."/>
            <person name="Tang C.C."/>
            <person name="Onodera C.S."/>
            <person name="Deng J.M."/>
            <person name="Akiyama K."/>
            <person name="Ansari Y."/>
            <person name="Arakawa T."/>
            <person name="Banh J."/>
            <person name="Banno F."/>
            <person name="Bowser L."/>
            <person name="Brooks S.Y."/>
            <person name="Carninci P."/>
            <person name="Chao Q."/>
            <person name="Choy N."/>
            <person name="Enju A."/>
            <person name="Goldsmith A.D."/>
            <person name="Gurjal M."/>
            <person name="Hansen N.F."/>
            <person name="Hayashizaki Y."/>
            <person name="Johnson-Hopson C."/>
            <person name="Hsuan V.W."/>
            <person name="Iida K."/>
            <person name="Karnes M."/>
            <person name="Khan S."/>
            <person name="Koesema E."/>
            <person name="Ishida J."/>
            <person name="Jiang P.X."/>
            <person name="Jones T."/>
            <person name="Kawai J."/>
            <person name="Kamiya A."/>
            <person name="Meyers C."/>
            <person name="Nakajima M."/>
            <person name="Narusaka M."/>
            <person name="Seki M."/>
            <person name="Sakurai T."/>
            <person name="Satou M."/>
            <person name="Tamse R."/>
            <person name="Vaysberg M."/>
            <person name="Wallender E.K."/>
            <person name="Wong C."/>
            <person name="Yamamura Y."/>
            <person name="Yuan S."/>
            <person name="Shinozaki K."/>
            <person name="Davis R.W."/>
            <person name="Theologis A."/>
            <person name="Ecker J.R."/>
        </authorList>
    </citation>
    <scope>NUCLEOTIDE SEQUENCE [LARGE SCALE MRNA]</scope>
    <source>
        <strain>cv. Columbia</strain>
    </source>
</reference>
<reference key="5">
    <citation type="submission" date="2002-03" db="EMBL/GenBank/DDBJ databases">
        <title>Full-length cDNA from Arabidopsis thaliana.</title>
        <authorList>
            <person name="Brover V.V."/>
            <person name="Troukhan M.E."/>
            <person name="Alexandrov N.A."/>
            <person name="Lu Y.-P."/>
            <person name="Flavell R.B."/>
            <person name="Feldmann K.A."/>
        </authorList>
    </citation>
    <scope>NUCLEOTIDE SEQUENCE [LARGE SCALE MRNA]</scope>
    <scope>INTERACTION WITH CAX1</scope>
</reference>
<reference key="6">
    <citation type="journal article" date="2004" name="FEBS Lett.">
        <title>Characterization of CXIP4, a novel Arabidopsis protein that activates the H+/Ca2+ antiporter, CAX1.</title>
        <authorList>
            <person name="Cheng N.-H."/>
            <person name="Liu J.-Z."/>
            <person name="Nelson R.S."/>
            <person name="Hirschi K.D."/>
        </authorList>
    </citation>
    <scope>FUNCTION</scope>
    <scope>SUBCELLULAR LOCATION</scope>
    <scope>TISSUE SPECIFICITY</scope>
    <scope>INDUCTION</scope>
</reference>
<reference key="7">
    <citation type="journal article" date="2009" name="Plant Physiol.">
        <title>Large-scale Arabidopsis phosphoproteome profiling reveals novel chloroplast kinase substrates and phosphorylation networks.</title>
        <authorList>
            <person name="Reiland S."/>
            <person name="Messerli G."/>
            <person name="Baerenfaller K."/>
            <person name="Gerrits B."/>
            <person name="Endler A."/>
            <person name="Grossmann J."/>
            <person name="Gruissem W."/>
            <person name="Baginsky S."/>
        </authorList>
    </citation>
    <scope>IDENTIFICATION BY MASS SPECTROMETRY [LARGE SCALE ANALYSIS]</scope>
</reference>